<name>Y3054_DESRM</name>
<organism>
    <name type="scientific">Desulforamulus reducens (strain ATCC BAA-1160 / DSM 100696 / MI-1)</name>
    <name type="common">Desulfotomaculum reducens</name>
    <dbReference type="NCBI Taxonomy" id="349161"/>
    <lineage>
        <taxon>Bacteria</taxon>
        <taxon>Bacillati</taxon>
        <taxon>Bacillota</taxon>
        <taxon>Clostridia</taxon>
        <taxon>Eubacteriales</taxon>
        <taxon>Peptococcaceae</taxon>
        <taxon>Desulforamulus</taxon>
    </lineage>
</organism>
<protein>
    <recommendedName>
        <fullName evidence="1">Nucleotide-binding protein Dred_3054</fullName>
    </recommendedName>
</protein>
<proteinExistence type="inferred from homology"/>
<gene>
    <name type="ordered locus">Dred_3054</name>
</gene>
<reference key="1">
    <citation type="submission" date="2007-03" db="EMBL/GenBank/DDBJ databases">
        <title>Complete sequence of Desulfotomaculum reducens MI-1.</title>
        <authorList>
            <consortium name="US DOE Joint Genome Institute"/>
            <person name="Copeland A."/>
            <person name="Lucas S."/>
            <person name="Lapidus A."/>
            <person name="Barry K."/>
            <person name="Detter J.C."/>
            <person name="Glavina del Rio T."/>
            <person name="Hammon N."/>
            <person name="Israni S."/>
            <person name="Dalin E."/>
            <person name="Tice H."/>
            <person name="Pitluck S."/>
            <person name="Sims D."/>
            <person name="Brettin T."/>
            <person name="Bruce D."/>
            <person name="Han C."/>
            <person name="Tapia R."/>
            <person name="Schmutz J."/>
            <person name="Larimer F."/>
            <person name="Land M."/>
            <person name="Hauser L."/>
            <person name="Kyrpides N."/>
            <person name="Kim E."/>
            <person name="Tebo B.M."/>
            <person name="Richardson P."/>
        </authorList>
    </citation>
    <scope>NUCLEOTIDE SEQUENCE [LARGE SCALE GENOMIC DNA]</scope>
    <source>
        <strain>ATCC BAA-1160 / DSM 100696 / MI-1</strain>
    </source>
</reference>
<comment type="function">
    <text evidence="1">Displays ATPase and GTPase activities.</text>
</comment>
<comment type="similarity">
    <text evidence="1">Belongs to the RapZ-like family.</text>
</comment>
<feature type="chain" id="PRO_0000383236" description="Nucleotide-binding protein Dred_3054">
    <location>
        <begin position="1"/>
        <end position="298"/>
    </location>
</feature>
<feature type="binding site" evidence="1">
    <location>
        <begin position="20"/>
        <end position="27"/>
    </location>
    <ligand>
        <name>ATP</name>
        <dbReference type="ChEBI" id="CHEBI:30616"/>
    </ligand>
</feature>
<feature type="binding site" evidence="1">
    <location>
        <begin position="71"/>
        <end position="74"/>
    </location>
    <ligand>
        <name>GTP</name>
        <dbReference type="ChEBI" id="CHEBI:37565"/>
    </ligand>
</feature>
<evidence type="ECO:0000255" key="1">
    <source>
        <dbReference type="HAMAP-Rule" id="MF_00636"/>
    </source>
</evidence>
<dbReference type="EMBL" id="CP000612">
    <property type="protein sequence ID" value="ABO51556.1"/>
    <property type="molecule type" value="Genomic_DNA"/>
</dbReference>
<dbReference type="RefSeq" id="WP_011879345.1">
    <property type="nucleotide sequence ID" value="NC_009253.1"/>
</dbReference>
<dbReference type="SMR" id="A4J903"/>
<dbReference type="STRING" id="349161.Dred_3054"/>
<dbReference type="KEGG" id="drm:Dred_3054"/>
<dbReference type="eggNOG" id="COG1660">
    <property type="taxonomic scope" value="Bacteria"/>
</dbReference>
<dbReference type="HOGENOM" id="CLU_059558_0_0_9"/>
<dbReference type="Proteomes" id="UP000001556">
    <property type="component" value="Chromosome"/>
</dbReference>
<dbReference type="GO" id="GO:0005524">
    <property type="term" value="F:ATP binding"/>
    <property type="evidence" value="ECO:0007669"/>
    <property type="project" value="UniProtKB-UniRule"/>
</dbReference>
<dbReference type="GO" id="GO:0005525">
    <property type="term" value="F:GTP binding"/>
    <property type="evidence" value="ECO:0007669"/>
    <property type="project" value="UniProtKB-UniRule"/>
</dbReference>
<dbReference type="Gene3D" id="3.40.50.300">
    <property type="entry name" value="P-loop containing nucleotide triphosphate hydrolases"/>
    <property type="match status" value="1"/>
</dbReference>
<dbReference type="HAMAP" id="MF_00636">
    <property type="entry name" value="RapZ_like"/>
    <property type="match status" value="1"/>
</dbReference>
<dbReference type="InterPro" id="IPR027417">
    <property type="entry name" value="P-loop_NTPase"/>
</dbReference>
<dbReference type="InterPro" id="IPR005337">
    <property type="entry name" value="RapZ-like"/>
</dbReference>
<dbReference type="InterPro" id="IPR053930">
    <property type="entry name" value="RapZ-like_N"/>
</dbReference>
<dbReference type="InterPro" id="IPR053931">
    <property type="entry name" value="RapZ_C"/>
</dbReference>
<dbReference type="NCBIfam" id="NF003828">
    <property type="entry name" value="PRK05416.1"/>
    <property type="match status" value="1"/>
</dbReference>
<dbReference type="PANTHER" id="PTHR30448">
    <property type="entry name" value="RNASE ADAPTER PROTEIN RAPZ"/>
    <property type="match status" value="1"/>
</dbReference>
<dbReference type="PANTHER" id="PTHR30448:SF0">
    <property type="entry name" value="RNASE ADAPTER PROTEIN RAPZ"/>
    <property type="match status" value="1"/>
</dbReference>
<dbReference type="Pfam" id="PF22740">
    <property type="entry name" value="PapZ_C"/>
    <property type="match status" value="1"/>
</dbReference>
<dbReference type="Pfam" id="PF03668">
    <property type="entry name" value="RapZ-like_N"/>
    <property type="match status" value="1"/>
</dbReference>
<dbReference type="PIRSF" id="PIRSF005052">
    <property type="entry name" value="P-loopkin"/>
    <property type="match status" value="1"/>
</dbReference>
<dbReference type="SUPFAM" id="SSF52540">
    <property type="entry name" value="P-loop containing nucleoside triphosphate hydrolases"/>
    <property type="match status" value="1"/>
</dbReference>
<accession>A4J903</accession>
<keyword id="KW-0067">ATP-binding</keyword>
<keyword id="KW-0342">GTP-binding</keyword>
<keyword id="KW-0547">Nucleotide-binding</keyword>
<keyword id="KW-1185">Reference proteome</keyword>
<sequence length="298" mass="33667">MSDSEGGVEVSSPRLLIVTGMSGAGKTQAVQSLEDLGYFCVDNLPPALIPKFAELVSQSNGKVEKVALVVDIRGGAFFHQAIEVLHDLGEQGYRFEVLFLEASDETLVRRYKESRRRHPLDNHGEVLKVIQEERELLREIRGRATKVIDTSNVSNNQLKEQIITQYGGDKENSNRLLITVISFGYKYGIPMDSDLVLDVRFLPNPYYIPELRCLTGNDEPVQQHVMSQDVTKEFMEKLIDFVQFLVPHYQREGKATLMIAIGCTGGMHRSVTLTNKLGEVLSEKGYRVNVRHRDIMRV</sequence>